<accession>Q9HCG8</accession>
<accession>Q05DC2</accession>
<accession>Q4G135</accession>
<accession>Q52LF0</accession>
<accession>Q6PEX2</accession>
<accession>Q7Z6I0</accession>
<accession>Q9H5L3</accession>
<accession>Q9H6Q6</accession>
<comment type="function">
    <text evidence="4 5 6 7 8 10 11 12 13 16">Required for pre-mRNA splicing as component of the spliceosome (PubMed:11991638, PubMed:12226669, PubMed:22961380, PubMed:28076346, PubMed:28502770, PubMed:29301961, PubMed:29360106). As a component of the minor spliceosome, involved in the splicing of U12-type introns in pre-mRNAs (Probable). Promotes exon-junction complex (EJC) assembly (PubMed:22959432, PubMed:22961380). Hinders EIF4A3 from non-specifically binding RNA and escorts it to the splicing machinery to promote EJC assembly on mature mRNAs. Through its role in EJC assembly, required for nonsense-mediated mRNA decay.</text>
</comment>
<comment type="subunit">
    <text evidence="4 5 6 7 8 9 10 11 12 13 14">Component of the pre-catalytic spliceosome B and the catalytic spliceosome C complexes (PubMed:11991638, PubMed:22961380, PubMed:28076346, PubMed:28502770, PubMed:29301961, PubMed:29360106). Component of the minor spliceosome, which splices U12-type introns (PubMed:33509932). Interacts with EIF4A3 and PRPF19 in an RNA-independent manner. Direct interaction with EIF4A3 is mediated by the MIF4G domain (PubMed:24218557). Full interaction with EIF4A3 occurs only when EIF4A3 is not part of the EJC and prevents EIF4A3 binding to RNA.</text>
</comment>
<comment type="interaction">
    <interactant intactId="EBI-373289">
        <id>Q9HCG8</id>
    </interactant>
    <interactant intactId="EBI-299104">
        <id>P38919</id>
        <label>EIF4A3</label>
    </interactant>
    <organismsDiffer>false</organismsDiffer>
    <experiments>6</experiments>
</comment>
<comment type="interaction">
    <interactant intactId="EBI-373289">
        <id>Q9HCG8</id>
    </interactant>
    <interactant intactId="EBI-726146">
        <id>Q9Y421</id>
        <label>FAM32A</label>
    </interactant>
    <organismsDiffer>false</organismsDiffer>
    <experiments>2</experiments>
</comment>
<comment type="interaction">
    <interactant intactId="EBI-373289">
        <id>Q9HCG8</id>
    </interactant>
    <interactant intactId="EBI-2515248">
        <id>Q14331</id>
        <label>FRG1</label>
    </interactant>
    <organismsDiffer>false</organismsDiffer>
    <experiments>2</experiments>
</comment>
<comment type="interaction">
    <interactant intactId="EBI-373289">
        <id>Q9HCG8</id>
    </interactant>
    <interactant intactId="EBI-746999">
        <id>O95198</id>
        <label>KLHL2</label>
    </interactant>
    <organismsDiffer>false</organismsDiffer>
    <experiments>3</experiments>
</comment>
<comment type="interaction">
    <interactant intactId="EBI-373289">
        <id>Q9HCG8</id>
    </interactant>
    <interactant intactId="EBI-2860264">
        <id>Q16825</id>
        <label>PTPN21</label>
    </interactant>
    <organismsDiffer>false</organismsDiffer>
    <experiments>3</experiments>
</comment>
<comment type="subcellular location">
    <subcellularLocation>
        <location evidence="4 11 12 13">Nucleus</location>
    </subcellularLocation>
    <subcellularLocation>
        <location evidence="7">Nucleus speckle</location>
    </subcellularLocation>
    <text evidence="7">Concentrates around speckles, which are sites of pre-mRNA synthesis and processing, where it colocalizes with EJC core proteins.</text>
</comment>
<comment type="similarity">
    <text evidence="15">Belongs to the CWC22 family.</text>
</comment>
<comment type="sequence caution" evidence="15">
    <conflict type="miscellaneous discrepancy">
        <sequence resource="EMBL-CDS" id="AAH16651"/>
    </conflict>
    <text>Contaminating sequence. Potential poly-A sequence.</text>
</comment>
<comment type="sequence caution" evidence="15">
    <conflict type="miscellaneous discrepancy">
        <sequence resource="EMBL-CDS" id="AAH31216"/>
    </conflict>
    <text>Contaminating sequence. Potential poly-A sequence.</text>
</comment>
<comment type="sequence caution" evidence="15">
    <conflict type="miscellaneous discrepancy">
        <sequence resource="EMBL-CDS" id="AAH57826"/>
    </conflict>
    <text>Contaminating sequence. Potential poly-A sequence.</text>
</comment>
<comment type="sequence caution" evidence="15">
    <conflict type="erroneous initiation">
        <sequence resource="EMBL-CDS" id="BAB13430"/>
    </conflict>
    <text>Extended N-terminus.</text>
</comment>
<comment type="sequence caution" evidence="15">
    <conflict type="frameshift">
        <sequence resource="EMBL-CDS" id="BAB15197"/>
    </conflict>
</comment>
<comment type="sequence caution" evidence="15">
    <conflict type="erroneous initiation">
        <sequence resource="EMBL-CDS" id="BAB15612"/>
    </conflict>
    <text>Truncated N-terminus.</text>
</comment>
<reference key="1">
    <citation type="journal article" date="2000" name="DNA Res.">
        <title>Prediction of the coding sequences of unidentified human genes. XVIII. The complete sequences of 100 new cDNA clones from brain which code for large proteins in vitro.</title>
        <authorList>
            <person name="Nagase T."/>
            <person name="Kikuno R."/>
            <person name="Nakayama M."/>
            <person name="Hirosawa M."/>
            <person name="Ohara O."/>
        </authorList>
    </citation>
    <scope>NUCLEOTIDE SEQUENCE [LARGE SCALE MRNA]</scope>
    <source>
        <tissue>Brain</tissue>
    </source>
</reference>
<reference key="2">
    <citation type="journal article" date="2004" name="Nat. Genet.">
        <title>Complete sequencing and characterization of 21,243 full-length human cDNAs.</title>
        <authorList>
            <person name="Ota T."/>
            <person name="Suzuki Y."/>
            <person name="Nishikawa T."/>
            <person name="Otsuki T."/>
            <person name="Sugiyama T."/>
            <person name="Irie R."/>
            <person name="Wakamatsu A."/>
            <person name="Hayashi K."/>
            <person name="Sato H."/>
            <person name="Nagai K."/>
            <person name="Kimura K."/>
            <person name="Makita H."/>
            <person name="Sekine M."/>
            <person name="Obayashi M."/>
            <person name="Nishi T."/>
            <person name="Shibahara T."/>
            <person name="Tanaka T."/>
            <person name="Ishii S."/>
            <person name="Yamamoto J."/>
            <person name="Saito K."/>
            <person name="Kawai Y."/>
            <person name="Isono Y."/>
            <person name="Nakamura Y."/>
            <person name="Nagahari K."/>
            <person name="Murakami K."/>
            <person name="Yasuda T."/>
            <person name="Iwayanagi T."/>
            <person name="Wagatsuma M."/>
            <person name="Shiratori A."/>
            <person name="Sudo H."/>
            <person name="Hosoiri T."/>
            <person name="Kaku Y."/>
            <person name="Kodaira H."/>
            <person name="Kondo H."/>
            <person name="Sugawara M."/>
            <person name="Takahashi M."/>
            <person name="Kanda K."/>
            <person name="Yokoi T."/>
            <person name="Furuya T."/>
            <person name="Kikkawa E."/>
            <person name="Omura Y."/>
            <person name="Abe K."/>
            <person name="Kamihara K."/>
            <person name="Katsuta N."/>
            <person name="Sato K."/>
            <person name="Tanikawa M."/>
            <person name="Yamazaki M."/>
            <person name="Ninomiya K."/>
            <person name="Ishibashi T."/>
            <person name="Yamashita H."/>
            <person name="Murakawa K."/>
            <person name="Fujimori K."/>
            <person name="Tanai H."/>
            <person name="Kimata M."/>
            <person name="Watanabe M."/>
            <person name="Hiraoka S."/>
            <person name="Chiba Y."/>
            <person name="Ishida S."/>
            <person name="Ono Y."/>
            <person name="Takiguchi S."/>
            <person name="Watanabe S."/>
            <person name="Yosida M."/>
            <person name="Hotuta T."/>
            <person name="Kusano J."/>
            <person name="Kanehori K."/>
            <person name="Takahashi-Fujii A."/>
            <person name="Hara H."/>
            <person name="Tanase T.-O."/>
            <person name="Nomura Y."/>
            <person name="Togiya S."/>
            <person name="Komai F."/>
            <person name="Hara R."/>
            <person name="Takeuchi K."/>
            <person name="Arita M."/>
            <person name="Imose N."/>
            <person name="Musashino K."/>
            <person name="Yuuki H."/>
            <person name="Oshima A."/>
            <person name="Sasaki N."/>
            <person name="Aotsuka S."/>
            <person name="Yoshikawa Y."/>
            <person name="Matsunawa H."/>
            <person name="Ichihara T."/>
            <person name="Shiohata N."/>
            <person name="Sano S."/>
            <person name="Moriya S."/>
            <person name="Momiyama H."/>
            <person name="Satoh N."/>
            <person name="Takami S."/>
            <person name="Terashima Y."/>
            <person name="Suzuki O."/>
            <person name="Nakagawa S."/>
            <person name="Senoh A."/>
            <person name="Mizoguchi H."/>
            <person name="Goto Y."/>
            <person name="Shimizu F."/>
            <person name="Wakebe H."/>
            <person name="Hishigaki H."/>
            <person name="Watanabe T."/>
            <person name="Sugiyama A."/>
            <person name="Takemoto M."/>
            <person name="Kawakami B."/>
            <person name="Yamazaki M."/>
            <person name="Watanabe K."/>
            <person name="Kumagai A."/>
            <person name="Itakura S."/>
            <person name="Fukuzumi Y."/>
            <person name="Fujimori Y."/>
            <person name="Komiyama M."/>
            <person name="Tashiro H."/>
            <person name="Tanigami A."/>
            <person name="Fujiwara T."/>
            <person name="Ono T."/>
            <person name="Yamada K."/>
            <person name="Fujii Y."/>
            <person name="Ozaki K."/>
            <person name="Hirao M."/>
            <person name="Ohmori Y."/>
            <person name="Kawabata A."/>
            <person name="Hikiji T."/>
            <person name="Kobatake N."/>
            <person name="Inagaki H."/>
            <person name="Ikema Y."/>
            <person name="Okamoto S."/>
            <person name="Okitani R."/>
            <person name="Kawakami T."/>
            <person name="Noguchi S."/>
            <person name="Itoh T."/>
            <person name="Shigeta K."/>
            <person name="Senba T."/>
            <person name="Matsumura K."/>
            <person name="Nakajima Y."/>
            <person name="Mizuno T."/>
            <person name="Morinaga M."/>
            <person name="Sasaki M."/>
            <person name="Togashi T."/>
            <person name="Oyama M."/>
            <person name="Hata H."/>
            <person name="Watanabe M."/>
            <person name="Komatsu T."/>
            <person name="Mizushima-Sugano J."/>
            <person name="Satoh T."/>
            <person name="Shirai Y."/>
            <person name="Takahashi Y."/>
            <person name="Nakagawa K."/>
            <person name="Okumura K."/>
            <person name="Nagase T."/>
            <person name="Nomura N."/>
            <person name="Kikuchi H."/>
            <person name="Masuho Y."/>
            <person name="Yamashita R."/>
            <person name="Nakai K."/>
            <person name="Yada T."/>
            <person name="Nakamura Y."/>
            <person name="Ohara O."/>
            <person name="Isogai T."/>
            <person name="Sugano S."/>
        </authorList>
    </citation>
    <scope>NUCLEOTIDE SEQUENCE [LARGE SCALE MRNA]</scope>
    <source>
        <tissue>Hepatoma</tissue>
    </source>
</reference>
<reference key="3">
    <citation type="journal article" date="2005" name="Nature">
        <title>Generation and annotation of the DNA sequences of human chromosomes 2 and 4.</title>
        <authorList>
            <person name="Hillier L.W."/>
            <person name="Graves T.A."/>
            <person name="Fulton R.S."/>
            <person name="Fulton L.A."/>
            <person name="Pepin K.H."/>
            <person name="Minx P."/>
            <person name="Wagner-McPherson C."/>
            <person name="Layman D."/>
            <person name="Wylie K."/>
            <person name="Sekhon M."/>
            <person name="Becker M.C."/>
            <person name="Fewell G.A."/>
            <person name="Delehaunty K.D."/>
            <person name="Miner T.L."/>
            <person name="Nash W.E."/>
            <person name="Kremitzki C."/>
            <person name="Oddy L."/>
            <person name="Du H."/>
            <person name="Sun H."/>
            <person name="Bradshaw-Cordum H."/>
            <person name="Ali J."/>
            <person name="Carter J."/>
            <person name="Cordes M."/>
            <person name="Harris A."/>
            <person name="Isak A."/>
            <person name="van Brunt A."/>
            <person name="Nguyen C."/>
            <person name="Du F."/>
            <person name="Courtney L."/>
            <person name="Kalicki J."/>
            <person name="Ozersky P."/>
            <person name="Abbott S."/>
            <person name="Armstrong J."/>
            <person name="Belter E.A."/>
            <person name="Caruso L."/>
            <person name="Cedroni M."/>
            <person name="Cotton M."/>
            <person name="Davidson T."/>
            <person name="Desai A."/>
            <person name="Elliott G."/>
            <person name="Erb T."/>
            <person name="Fronick C."/>
            <person name="Gaige T."/>
            <person name="Haakenson W."/>
            <person name="Haglund K."/>
            <person name="Holmes A."/>
            <person name="Harkins R."/>
            <person name="Kim K."/>
            <person name="Kruchowski S.S."/>
            <person name="Strong C.M."/>
            <person name="Grewal N."/>
            <person name="Goyea E."/>
            <person name="Hou S."/>
            <person name="Levy A."/>
            <person name="Martinka S."/>
            <person name="Mead K."/>
            <person name="McLellan M.D."/>
            <person name="Meyer R."/>
            <person name="Randall-Maher J."/>
            <person name="Tomlinson C."/>
            <person name="Dauphin-Kohlberg S."/>
            <person name="Kozlowicz-Reilly A."/>
            <person name="Shah N."/>
            <person name="Swearengen-Shahid S."/>
            <person name="Snider J."/>
            <person name="Strong J.T."/>
            <person name="Thompson J."/>
            <person name="Yoakum M."/>
            <person name="Leonard S."/>
            <person name="Pearman C."/>
            <person name="Trani L."/>
            <person name="Radionenko M."/>
            <person name="Waligorski J.E."/>
            <person name="Wang C."/>
            <person name="Rock S.M."/>
            <person name="Tin-Wollam A.-M."/>
            <person name="Maupin R."/>
            <person name="Latreille P."/>
            <person name="Wendl M.C."/>
            <person name="Yang S.-P."/>
            <person name="Pohl C."/>
            <person name="Wallis J.W."/>
            <person name="Spieth J."/>
            <person name="Bieri T.A."/>
            <person name="Berkowicz N."/>
            <person name="Nelson J.O."/>
            <person name="Osborne J."/>
            <person name="Ding L."/>
            <person name="Meyer R."/>
            <person name="Sabo A."/>
            <person name="Shotland Y."/>
            <person name="Sinha P."/>
            <person name="Wohldmann P.E."/>
            <person name="Cook L.L."/>
            <person name="Hickenbotham M.T."/>
            <person name="Eldred J."/>
            <person name="Williams D."/>
            <person name="Jones T.A."/>
            <person name="She X."/>
            <person name="Ciccarelli F.D."/>
            <person name="Izaurralde E."/>
            <person name="Taylor J."/>
            <person name="Schmutz J."/>
            <person name="Myers R.M."/>
            <person name="Cox D.R."/>
            <person name="Huang X."/>
            <person name="McPherson J.D."/>
            <person name="Mardis E.R."/>
            <person name="Clifton S.W."/>
            <person name="Warren W.C."/>
            <person name="Chinwalla A.T."/>
            <person name="Eddy S.R."/>
            <person name="Marra M.A."/>
            <person name="Ovcharenko I."/>
            <person name="Furey T.S."/>
            <person name="Miller W."/>
            <person name="Eichler E.E."/>
            <person name="Bork P."/>
            <person name="Suyama M."/>
            <person name="Torrents D."/>
            <person name="Waterston R.H."/>
            <person name="Wilson R.K."/>
        </authorList>
    </citation>
    <scope>NUCLEOTIDE SEQUENCE [LARGE SCALE GENOMIC DNA]</scope>
</reference>
<reference key="4">
    <citation type="journal article" date="2004" name="Genome Res.">
        <title>The status, quality, and expansion of the NIH full-length cDNA project: the Mammalian Gene Collection (MGC).</title>
        <authorList>
            <consortium name="The MGC Project Team"/>
        </authorList>
    </citation>
    <scope>NUCLEOTIDE SEQUENCE [LARGE SCALE MRNA]</scope>
    <source>
        <tissue>Brain</tissue>
        <tissue>Eye</tissue>
        <tissue>Lymph</tissue>
        <tissue>Placenta</tissue>
        <tissue>Testis</tissue>
    </source>
</reference>
<reference key="5">
    <citation type="journal article" date="2002" name="Nature">
        <title>Comprehensive proteomic analysis of the human spliceosome.</title>
        <authorList>
            <person name="Zhou Z."/>
            <person name="Licklider L.J."/>
            <person name="Gygi S.P."/>
            <person name="Reed R."/>
        </authorList>
    </citation>
    <scope>IDENTIFICATION IN THE SPLICEOSOME</scope>
    <scope>IDENTIFICATION BY MASS SPECTROMETRY</scope>
</reference>
<reference key="6">
    <citation type="journal article" date="2002" name="RNA">
        <title>Purification and characterization of native spliceosomes suitable for three-dimensional structural analysis.</title>
        <authorList>
            <person name="Jurica M.S."/>
            <person name="Licklider L.J."/>
            <person name="Gygi S.P."/>
            <person name="Grigorieff N."/>
            <person name="Moore M.J."/>
        </authorList>
    </citation>
    <scope>IDENTIFICATION IN SPLICEOSOME C COMPLEX</scope>
    <scope>SUBCELLULAR LOCATION</scope>
    <scope>IDENTIFICATION BY MASS SPECTROMETRY</scope>
</reference>
<reference key="7">
    <citation type="journal article" date="2006" name="Cell">
        <title>Global, in vivo, and site-specific phosphorylation dynamics in signaling networks.</title>
        <authorList>
            <person name="Olsen J.V."/>
            <person name="Blagoev B."/>
            <person name="Gnad F."/>
            <person name="Macek B."/>
            <person name="Kumar C."/>
            <person name="Mortensen P."/>
            <person name="Mann M."/>
        </authorList>
    </citation>
    <scope>IDENTIFICATION BY MASS SPECTROMETRY [LARGE SCALE ANALYSIS]</scope>
    <source>
        <tissue>Cervix carcinoma</tissue>
    </source>
</reference>
<reference key="8">
    <citation type="journal article" date="2009" name="Anal. Chem.">
        <title>Lys-N and trypsin cover complementary parts of the phosphoproteome in a refined SCX-based approach.</title>
        <authorList>
            <person name="Gauci S."/>
            <person name="Helbig A.O."/>
            <person name="Slijper M."/>
            <person name="Krijgsveld J."/>
            <person name="Heck A.J."/>
            <person name="Mohammed S."/>
        </authorList>
    </citation>
    <scope>IDENTIFICATION BY MASS SPECTROMETRY [LARGE SCALE ANALYSIS]</scope>
</reference>
<reference key="9">
    <citation type="journal article" date="2010" name="Sci. Signal.">
        <title>Quantitative phosphoproteomics reveals widespread full phosphorylation site occupancy during mitosis.</title>
        <authorList>
            <person name="Olsen J.V."/>
            <person name="Vermeulen M."/>
            <person name="Santamaria A."/>
            <person name="Kumar C."/>
            <person name="Miller M.L."/>
            <person name="Jensen L.J."/>
            <person name="Gnad F."/>
            <person name="Cox J."/>
            <person name="Jensen T.S."/>
            <person name="Nigg E.A."/>
            <person name="Brunak S."/>
            <person name="Mann M."/>
        </authorList>
    </citation>
    <scope>PHOSPHORYLATION [LARGE SCALE ANALYSIS] AT SER-829</scope>
    <scope>IDENTIFICATION BY MASS SPECTROMETRY [LARGE SCALE ANALYSIS]</scope>
    <source>
        <tissue>Cervix carcinoma</tissue>
    </source>
</reference>
<reference key="10">
    <citation type="journal article" date="2011" name="BMC Syst. Biol.">
        <title>Initial characterization of the human central proteome.</title>
        <authorList>
            <person name="Burkard T.R."/>
            <person name="Planyavsky M."/>
            <person name="Kaupe I."/>
            <person name="Breitwieser F.P."/>
            <person name="Buerckstuemmer T."/>
            <person name="Bennett K.L."/>
            <person name="Superti-Furga G."/>
            <person name="Colinge J."/>
        </authorList>
    </citation>
    <scope>IDENTIFICATION BY MASS SPECTROMETRY [LARGE SCALE ANALYSIS]</scope>
</reference>
<reference key="11">
    <citation type="journal article" date="2011" name="Sci. Signal.">
        <title>System-wide temporal characterization of the proteome and phosphoproteome of human embryonic stem cell differentiation.</title>
        <authorList>
            <person name="Rigbolt K.T."/>
            <person name="Prokhorova T.A."/>
            <person name="Akimov V."/>
            <person name="Henningsen J."/>
            <person name="Johansen P.T."/>
            <person name="Kratchmarova I."/>
            <person name="Kassem M."/>
            <person name="Mann M."/>
            <person name="Olsen J.V."/>
            <person name="Blagoev B."/>
        </authorList>
    </citation>
    <scope>PHOSPHORYLATION [LARGE SCALE ANALYSIS] AT SER-61 AND SER-829</scope>
    <scope>IDENTIFICATION BY MASS SPECTROMETRY [LARGE SCALE ANALYSIS]</scope>
</reference>
<reference key="12">
    <citation type="journal article" date="2012" name="Cell Rep.">
        <title>CWC22 connects pre-mRNA splicing and exon junction complex assembly.</title>
        <authorList>
            <person name="Steckelberg A.L."/>
            <person name="Boehm V."/>
            <person name="Gromadzka A.M."/>
            <person name="Gehring N.H."/>
        </authorList>
    </citation>
    <scope>FUNCTION</scope>
    <scope>INTERACTION WITH EIF4A3</scope>
    <scope>MUTAGENESIS OF 171-ASN-LYS-172</scope>
</reference>
<reference key="13">
    <citation type="journal article" date="2012" name="Nat. Struct. Mol. Biol.">
        <title>Human CWC22 escorts the helicase eIF4AIII to spliceosomes and promotes exon junction complex assembly.</title>
        <authorList>
            <person name="Barbosa I."/>
            <person name="Haque N."/>
            <person name="Fiorini F."/>
            <person name="Barrandon C."/>
            <person name="Tomasetto C."/>
            <person name="Blanchette M."/>
            <person name="Le Hir H."/>
        </authorList>
    </citation>
    <scope>FUNCTION</scope>
    <scope>INTERACTION WITH EIF4A3</scope>
    <scope>IDENTIFICATION IN SPLICEOSOME C COMPLEX</scope>
    <scope>SUBCELLULAR LOCATION</scope>
</reference>
<reference key="14">
    <citation type="journal article" date="2012" name="Proc. Natl. Acad. Sci. U.S.A.">
        <title>Human spliceosomal protein CWC22 plays a role in coupling splicing to exon junction complex deposition and nonsense-mediated decay.</title>
        <authorList>
            <person name="Alexandrov A."/>
            <person name="Colognori D."/>
            <person name="Shu M.D."/>
            <person name="Steitz J.A."/>
        </authorList>
    </citation>
    <scope>FUNCTION</scope>
    <scope>INTERACTION WITH EIF4A3</scope>
    <scope>MUTAGENESIS OF GLY-168; ARG-331 AND TYR-334</scope>
</reference>
<reference key="15">
    <citation type="journal article" date="2013" name="J. Proteome Res.">
        <title>Toward a comprehensive characterization of a human cancer cell phosphoproteome.</title>
        <authorList>
            <person name="Zhou H."/>
            <person name="Di Palma S."/>
            <person name="Preisinger C."/>
            <person name="Peng M."/>
            <person name="Polat A.N."/>
            <person name="Heck A.J."/>
            <person name="Mohammed S."/>
        </authorList>
    </citation>
    <scope>PHOSPHORYLATION [LARGE SCALE ANALYSIS] AT SER-39 AND SER-786</scope>
    <scope>IDENTIFICATION BY MASS SPECTROMETRY [LARGE SCALE ANALYSIS]</scope>
    <source>
        <tissue>Cervix carcinoma</tissue>
        <tissue>Erythroleukemia</tissue>
    </source>
</reference>
<reference evidence="17" key="16">
    <citation type="journal article" date="2013" name="Proc. Natl. Acad. Sci. U.S.A.">
        <title>Crystal structure of the human eIF4AIII-CWC22 complex shows how a DEAD-box protein is inhibited by a MIF4G domain.</title>
        <authorList>
            <person name="Buchwald G."/>
            <person name="Schussler S."/>
            <person name="Basquin C."/>
            <person name="Le Hir H."/>
            <person name="Conti E."/>
        </authorList>
    </citation>
    <scope>X-RAY CRYSTALLOGRAPHY (2.00 ANGSTROMS) OF 116-406 IN COMPLEX WITH EIF4A3</scope>
</reference>
<reference evidence="19" key="17">
    <citation type="journal article" date="2017" name="Cell">
        <title>An Atomic Structure of the Human Spliceosome.</title>
        <authorList>
            <person name="Zhang X."/>
            <person name="Yan C."/>
            <person name="Hang J."/>
            <person name="Finci L.I."/>
            <person name="Lei J."/>
            <person name="Shi Y."/>
        </authorList>
    </citation>
    <scope>STRUCTURE BY ELECTRON MICROSCOPY (3.60 ANGSTROMS)</scope>
    <scope>FUNCTION</scope>
    <scope>SUBCELLULAR LOCATION</scope>
    <scope>SUBUNIT</scope>
</reference>
<reference evidence="18" key="18">
    <citation type="journal article" date="2017" name="Nature">
        <title>Cryo-EM structure of a human spliceosome activated for step 2 of splicing.</title>
        <authorList>
            <person name="Bertram K."/>
            <person name="Agafonov D.E."/>
            <person name="Liu W.T."/>
            <person name="Dybkov O."/>
            <person name="Will C.L."/>
            <person name="Hartmuth K."/>
            <person name="Urlaub H."/>
            <person name="Kastner B."/>
            <person name="Stark H."/>
            <person name="Luhrmann R."/>
        </authorList>
    </citation>
    <scope>STRUCTURE BY ELECTRON MICROSCOPY (5.90 ANGSTROMS)</scope>
    <scope>FUNCTION</scope>
    <scope>SUBCELLULAR LOCATION</scope>
    <scope>SUBUNIT</scope>
    <scope>IDENTIFICATION BY MASS SPECTROMETRY</scope>
</reference>
<reference evidence="21 22 23" key="19">
    <citation type="journal article" date="2018" name="Cell Res.">
        <title>Structure of the human activated spliceosome in three conformational states.</title>
        <authorList>
            <person name="Zhang X."/>
            <person name="Yan C."/>
            <person name="Zhan X."/>
            <person name="Li L."/>
            <person name="Lei J."/>
            <person name="Shi Y."/>
        </authorList>
    </citation>
    <scope>STRUCTURE BY ELECTRON MICROSCOPY (4.90 ANGSTROMS)</scope>
    <scope>FUNCTION</scope>
    <scope>SUBCELLULAR LOCATION</scope>
    <scope>SUBUNIT</scope>
</reference>
<reference evidence="20" key="20">
    <citation type="journal article" date="2018" name="Science">
        <title>Structure of a human catalytic step I spliceosome.</title>
        <authorList>
            <person name="Zhan X."/>
            <person name="Yan C."/>
            <person name="Zhang X."/>
            <person name="Lei J."/>
            <person name="Shi Y."/>
        </authorList>
    </citation>
    <scope>STRUCTURE BY ELECTRON MICROSCOPY (4.10 ANGSTROMS)</scope>
    <scope>FUNCTION</scope>
    <scope>SUBCELLULAR LOCATION</scope>
    <scope>SUBUNIT</scope>
</reference>
<reference evidence="24" key="21">
    <citation type="journal article" date="2021" name="Science">
        <title>Structure of the activated human minor spliceosome.</title>
        <authorList>
            <person name="Bai R."/>
            <person name="Wan R."/>
            <person name="Wang L."/>
            <person name="Xu K."/>
            <person name="Zhang Q."/>
            <person name="Lei J."/>
            <person name="Shi Y."/>
        </authorList>
    </citation>
    <scope>STRUCTURE BY ELECTRON MICROSCOPY (2.89 ANGSTROMS)</scope>
    <scope>SUBUNIT</scope>
</reference>
<evidence type="ECO:0000250" key="1">
    <source>
        <dbReference type="UniProtKB" id="Q8C5N3"/>
    </source>
</evidence>
<evidence type="ECO:0000255" key="2">
    <source>
        <dbReference type="PROSITE-ProRule" id="PRU00698"/>
    </source>
</evidence>
<evidence type="ECO:0000256" key="3">
    <source>
        <dbReference type="SAM" id="MobiDB-lite"/>
    </source>
</evidence>
<evidence type="ECO:0000269" key="4">
    <source>
    </source>
</evidence>
<evidence type="ECO:0000269" key="5">
    <source>
    </source>
</evidence>
<evidence type="ECO:0000269" key="6">
    <source>
    </source>
</evidence>
<evidence type="ECO:0000269" key="7">
    <source>
    </source>
</evidence>
<evidence type="ECO:0000269" key="8">
    <source>
    </source>
</evidence>
<evidence type="ECO:0000269" key="9">
    <source>
    </source>
</evidence>
<evidence type="ECO:0000269" key="10">
    <source>
    </source>
</evidence>
<evidence type="ECO:0000269" key="11">
    <source>
    </source>
</evidence>
<evidence type="ECO:0000269" key="12">
    <source>
    </source>
</evidence>
<evidence type="ECO:0000269" key="13">
    <source>
    </source>
</evidence>
<evidence type="ECO:0000269" key="14">
    <source>
    </source>
</evidence>
<evidence type="ECO:0000305" key="15"/>
<evidence type="ECO:0000305" key="16">
    <source>
    </source>
</evidence>
<evidence type="ECO:0007744" key="17">
    <source>
        <dbReference type="PDB" id="4C9B"/>
    </source>
</evidence>
<evidence type="ECO:0007744" key="18">
    <source>
        <dbReference type="PDB" id="5MQF"/>
    </source>
</evidence>
<evidence type="ECO:0007744" key="19">
    <source>
        <dbReference type="PDB" id="5XJC"/>
    </source>
</evidence>
<evidence type="ECO:0007744" key="20">
    <source>
        <dbReference type="PDB" id="5YZG"/>
    </source>
</evidence>
<evidence type="ECO:0007744" key="21">
    <source>
        <dbReference type="PDB" id="5Z56"/>
    </source>
</evidence>
<evidence type="ECO:0007744" key="22">
    <source>
        <dbReference type="PDB" id="5Z57"/>
    </source>
</evidence>
<evidence type="ECO:0007744" key="23">
    <source>
        <dbReference type="PDB" id="5Z58"/>
    </source>
</evidence>
<evidence type="ECO:0007744" key="24">
    <source>
        <dbReference type="PDB" id="7DVQ"/>
    </source>
</evidence>
<evidence type="ECO:0007744" key="25">
    <source>
    </source>
</evidence>
<evidence type="ECO:0007744" key="26">
    <source>
    </source>
</evidence>
<evidence type="ECO:0007744" key="27">
    <source>
    </source>
</evidence>
<evidence type="ECO:0007829" key="28">
    <source>
        <dbReference type="PDB" id="4C9B"/>
    </source>
</evidence>
<evidence type="ECO:0007829" key="29">
    <source>
        <dbReference type="PDB" id="6ZYM"/>
    </source>
</evidence>
<evidence type="ECO:0007829" key="30">
    <source>
        <dbReference type="PDB" id="7DVQ"/>
    </source>
</evidence>
<evidence type="ECO:0007829" key="31">
    <source>
        <dbReference type="PDB" id="7QTT"/>
    </source>
</evidence>
<gene>
    <name type="primary">CWC22</name>
    <name type="synonym">KIAA1604</name>
    <name type="synonym">NCM</name>
</gene>
<proteinExistence type="evidence at protein level"/>
<dbReference type="EMBL" id="AB046824">
    <property type="protein sequence ID" value="BAB13430.1"/>
    <property type="status" value="ALT_INIT"/>
    <property type="molecule type" value="mRNA"/>
</dbReference>
<dbReference type="EMBL" id="AK025635">
    <property type="protein sequence ID" value="BAB15197.1"/>
    <property type="status" value="ALT_FRAME"/>
    <property type="molecule type" value="mRNA"/>
</dbReference>
<dbReference type="EMBL" id="AK026978">
    <property type="protein sequence ID" value="BAB15612.1"/>
    <property type="status" value="ALT_INIT"/>
    <property type="molecule type" value="mRNA"/>
</dbReference>
<dbReference type="EMBL" id="AC068194">
    <property type="status" value="NOT_ANNOTATED_CDS"/>
    <property type="molecule type" value="Genomic_DNA"/>
</dbReference>
<dbReference type="EMBL" id="AC096587">
    <property type="status" value="NOT_ANNOTATED_CDS"/>
    <property type="molecule type" value="Genomic_DNA"/>
</dbReference>
<dbReference type="EMBL" id="BC016651">
    <property type="protein sequence ID" value="AAH16651.1"/>
    <property type="status" value="ALT_SEQ"/>
    <property type="molecule type" value="mRNA"/>
</dbReference>
<dbReference type="EMBL" id="BC031216">
    <property type="protein sequence ID" value="AAH31216.1"/>
    <property type="status" value="ALT_SEQ"/>
    <property type="molecule type" value="mRNA"/>
</dbReference>
<dbReference type="EMBL" id="BC053573">
    <property type="protein sequence ID" value="AAH53573.1"/>
    <property type="molecule type" value="mRNA"/>
</dbReference>
<dbReference type="EMBL" id="BC057826">
    <property type="protein sequence ID" value="AAH57826.1"/>
    <property type="status" value="ALT_SEQ"/>
    <property type="molecule type" value="mRNA"/>
</dbReference>
<dbReference type="EMBL" id="BC093952">
    <property type="protein sequence ID" value="AAH93952.1"/>
    <property type="molecule type" value="mRNA"/>
</dbReference>
<dbReference type="EMBL" id="BC093954">
    <property type="protein sequence ID" value="AAH93954.1"/>
    <property type="molecule type" value="mRNA"/>
</dbReference>
<dbReference type="CCDS" id="CCDS46465.1"/>
<dbReference type="RefSeq" id="NP_001362958.1">
    <property type="nucleotide sequence ID" value="NM_001376029.1"/>
</dbReference>
<dbReference type="RefSeq" id="NP_001362959.1">
    <property type="nucleotide sequence ID" value="NM_001376030.1"/>
</dbReference>
<dbReference type="RefSeq" id="NP_065994.1">
    <property type="nucleotide sequence ID" value="NM_020943.3"/>
</dbReference>
<dbReference type="RefSeq" id="XP_005246783.1">
    <property type="nucleotide sequence ID" value="XM_005246726.2"/>
</dbReference>
<dbReference type="PDB" id="4C9B">
    <property type="method" value="X-ray"/>
    <property type="resolution" value="2.00 A"/>
    <property type="chains" value="B=116-406"/>
</dbReference>
<dbReference type="PDB" id="5MQF">
    <property type="method" value="EM"/>
    <property type="resolution" value="5.90 A"/>
    <property type="chains" value="T=1-908"/>
</dbReference>
<dbReference type="PDB" id="5XJC">
    <property type="method" value="EM"/>
    <property type="resolution" value="3.60 A"/>
    <property type="chains" value="V=1-908"/>
</dbReference>
<dbReference type="PDB" id="5YZG">
    <property type="method" value="EM"/>
    <property type="resolution" value="4.10 A"/>
    <property type="chains" value="V=1-908"/>
</dbReference>
<dbReference type="PDB" id="5Z56">
    <property type="method" value="EM"/>
    <property type="resolution" value="5.10 A"/>
    <property type="chains" value="V=1-908"/>
</dbReference>
<dbReference type="PDB" id="5Z57">
    <property type="method" value="EM"/>
    <property type="resolution" value="6.50 A"/>
    <property type="chains" value="V=1-908"/>
</dbReference>
<dbReference type="PDB" id="5Z58">
    <property type="method" value="EM"/>
    <property type="resolution" value="4.90 A"/>
    <property type="chains" value="V=1-908"/>
</dbReference>
<dbReference type="PDB" id="6FF7">
    <property type="method" value="EM"/>
    <property type="resolution" value="4.50 A"/>
    <property type="chains" value="T=1-908"/>
</dbReference>
<dbReference type="PDB" id="6ICZ">
    <property type="method" value="EM"/>
    <property type="resolution" value="3.00 A"/>
    <property type="chains" value="V=1-908"/>
</dbReference>
<dbReference type="PDB" id="6QDV">
    <property type="method" value="EM"/>
    <property type="resolution" value="3.30 A"/>
    <property type="chains" value="H=1-908"/>
</dbReference>
<dbReference type="PDB" id="6YVH">
    <property type="method" value="X-ray"/>
    <property type="resolution" value="3.19 A"/>
    <property type="chains" value="A/B/D/F=119-406"/>
</dbReference>
<dbReference type="PDB" id="6ZYM">
    <property type="method" value="EM"/>
    <property type="resolution" value="3.40 A"/>
    <property type="chains" value="T=1-908"/>
</dbReference>
<dbReference type="PDB" id="7A5P">
    <property type="method" value="EM"/>
    <property type="resolution" value="5.00 A"/>
    <property type="chains" value="T=1-908"/>
</dbReference>
<dbReference type="PDB" id="7DVQ">
    <property type="method" value="EM"/>
    <property type="resolution" value="2.89 A"/>
    <property type="chains" value="V=1-908"/>
</dbReference>
<dbReference type="PDB" id="7QTT">
    <property type="method" value="EM"/>
    <property type="resolution" value="3.10 A"/>
    <property type="chains" value="W=1-908"/>
</dbReference>
<dbReference type="PDB" id="7W59">
    <property type="method" value="EM"/>
    <property type="resolution" value="3.60 A"/>
    <property type="chains" value="V=1-908"/>
</dbReference>
<dbReference type="PDB" id="7W5A">
    <property type="method" value="EM"/>
    <property type="resolution" value="3.60 A"/>
    <property type="chains" value="V=1-908"/>
</dbReference>
<dbReference type="PDB" id="7W5B">
    <property type="method" value="EM"/>
    <property type="resolution" value="4.30 A"/>
    <property type="chains" value="V=1-908"/>
</dbReference>
<dbReference type="PDB" id="8C6J">
    <property type="method" value="EM"/>
    <property type="resolution" value="2.80 A"/>
    <property type="chains" value="H=149-648"/>
</dbReference>
<dbReference type="PDB" id="8CH6">
    <property type="method" value="EM"/>
    <property type="resolution" value="5.90 A"/>
    <property type="chains" value="W=1-908"/>
</dbReference>
<dbReference type="PDB" id="8I0R">
    <property type="method" value="EM"/>
    <property type="resolution" value="3.00 A"/>
    <property type="chains" value="V=1-908"/>
</dbReference>
<dbReference type="PDB" id="8I0S">
    <property type="method" value="EM"/>
    <property type="resolution" value="4.20 A"/>
    <property type="chains" value="V=1-908"/>
</dbReference>
<dbReference type="PDB" id="8I0T">
    <property type="method" value="EM"/>
    <property type="resolution" value="3.00 A"/>
    <property type="chains" value="V=1-908"/>
</dbReference>
<dbReference type="PDB" id="8I0U">
    <property type="method" value="EM"/>
    <property type="resolution" value="3.30 A"/>
    <property type="chains" value="V=1-908"/>
</dbReference>
<dbReference type="PDB" id="8I0V">
    <property type="method" value="EM"/>
    <property type="resolution" value="3.00 A"/>
    <property type="chains" value="V=1-908"/>
</dbReference>
<dbReference type="PDB" id="8I0W">
    <property type="method" value="EM"/>
    <property type="resolution" value="3.40 A"/>
    <property type="chains" value="V=1-908"/>
</dbReference>
<dbReference type="PDB" id="9FMD">
    <property type="method" value="EM"/>
    <property type="resolution" value="3.30 A"/>
    <property type="chains" value="H=1-908"/>
</dbReference>
<dbReference type="PDBsum" id="4C9B"/>
<dbReference type="PDBsum" id="5MQF"/>
<dbReference type="PDBsum" id="5XJC"/>
<dbReference type="PDBsum" id="5YZG"/>
<dbReference type="PDBsum" id="5Z56"/>
<dbReference type="PDBsum" id="5Z57"/>
<dbReference type="PDBsum" id="5Z58"/>
<dbReference type="PDBsum" id="6FF7"/>
<dbReference type="PDBsum" id="6ICZ"/>
<dbReference type="PDBsum" id="6QDV"/>
<dbReference type="PDBsum" id="6YVH"/>
<dbReference type="PDBsum" id="6ZYM"/>
<dbReference type="PDBsum" id="7A5P"/>
<dbReference type="PDBsum" id="7DVQ"/>
<dbReference type="PDBsum" id="7QTT"/>
<dbReference type="PDBsum" id="7W59"/>
<dbReference type="PDBsum" id="7W5A"/>
<dbReference type="PDBsum" id="7W5B"/>
<dbReference type="PDBsum" id="8C6J"/>
<dbReference type="PDBsum" id="8CH6"/>
<dbReference type="PDBsum" id="8I0R"/>
<dbReference type="PDBsum" id="8I0S"/>
<dbReference type="PDBsum" id="8I0T"/>
<dbReference type="PDBsum" id="8I0U"/>
<dbReference type="PDBsum" id="8I0V"/>
<dbReference type="PDBsum" id="8I0W"/>
<dbReference type="PDBsum" id="9FMD"/>
<dbReference type="EMDB" id="EMD-11569"/>
<dbReference type="EMDB" id="EMD-14146"/>
<dbReference type="EMDB" id="EMD-16452"/>
<dbReference type="EMDB" id="EMD-16658"/>
<dbReference type="EMDB" id="EMD-30875"/>
<dbReference type="EMDB" id="EMD-32317"/>
<dbReference type="EMDB" id="EMD-32319"/>
<dbReference type="EMDB" id="EMD-32321"/>
<dbReference type="EMDB" id="EMD-35107"/>
<dbReference type="EMDB" id="EMD-35108"/>
<dbReference type="EMDB" id="EMD-35109"/>
<dbReference type="EMDB" id="EMD-35110"/>
<dbReference type="EMDB" id="EMD-35111"/>
<dbReference type="EMDB" id="EMD-35113"/>
<dbReference type="EMDB" id="EMD-3545"/>
<dbReference type="EMDB" id="EMD-4525"/>
<dbReference type="EMDB" id="EMD-6721"/>
<dbReference type="EMDB" id="EMD-6864"/>
<dbReference type="EMDB" id="EMD-6889"/>
<dbReference type="EMDB" id="EMD-6890"/>
<dbReference type="EMDB" id="EMD-6891"/>
<dbReference type="EMDB" id="EMD-9645"/>
<dbReference type="SMR" id="Q9HCG8"/>
<dbReference type="BioGRID" id="121727">
    <property type="interactions" value="129"/>
</dbReference>
<dbReference type="CORUM" id="Q9HCG8"/>
<dbReference type="DIP" id="DIP-31268N"/>
<dbReference type="FunCoup" id="Q9HCG8">
    <property type="interactions" value="3407"/>
</dbReference>
<dbReference type="IntAct" id="Q9HCG8">
    <property type="interactions" value="70"/>
</dbReference>
<dbReference type="MINT" id="Q9HCG8"/>
<dbReference type="STRING" id="9606.ENSP00000387006"/>
<dbReference type="GlyGen" id="Q9HCG8">
    <property type="glycosylation" value="1 site, 1 O-linked glycan (1 site)"/>
</dbReference>
<dbReference type="iPTMnet" id="Q9HCG8"/>
<dbReference type="MetOSite" id="Q9HCG8"/>
<dbReference type="PhosphoSitePlus" id="Q9HCG8"/>
<dbReference type="SwissPalm" id="Q9HCG8"/>
<dbReference type="BioMuta" id="CWC22"/>
<dbReference type="DMDM" id="296439380"/>
<dbReference type="jPOST" id="Q9HCG8"/>
<dbReference type="MassIVE" id="Q9HCG8"/>
<dbReference type="PaxDb" id="9606-ENSP00000387006"/>
<dbReference type="PeptideAtlas" id="Q9HCG8"/>
<dbReference type="ProteomicsDB" id="81712"/>
<dbReference type="Pumba" id="Q9HCG8"/>
<dbReference type="Antibodypedia" id="33977">
    <property type="antibodies" value="149 antibodies from 21 providers"/>
</dbReference>
<dbReference type="DNASU" id="57703"/>
<dbReference type="Ensembl" id="ENST00000410053.8">
    <property type="protein sequence ID" value="ENSP00000387006.3"/>
    <property type="gene ID" value="ENSG00000163510.14"/>
</dbReference>
<dbReference type="GeneID" id="57703"/>
<dbReference type="KEGG" id="hsa:57703"/>
<dbReference type="MANE-Select" id="ENST00000410053.8">
    <property type="protein sequence ID" value="ENSP00000387006.3"/>
    <property type="RefSeq nucleotide sequence ID" value="NM_020943.3"/>
    <property type="RefSeq protein sequence ID" value="NP_065994.1"/>
</dbReference>
<dbReference type="UCSC" id="uc010frh.2">
    <property type="organism name" value="human"/>
</dbReference>
<dbReference type="AGR" id="HGNC:29322"/>
<dbReference type="CTD" id="57703"/>
<dbReference type="DisGeNET" id="57703"/>
<dbReference type="GeneCards" id="CWC22"/>
<dbReference type="HGNC" id="HGNC:29322">
    <property type="gene designation" value="CWC22"/>
</dbReference>
<dbReference type="HPA" id="ENSG00000163510">
    <property type="expression patterns" value="Low tissue specificity"/>
</dbReference>
<dbReference type="MIM" id="615186">
    <property type="type" value="gene"/>
</dbReference>
<dbReference type="neXtProt" id="NX_Q9HCG8"/>
<dbReference type="OpenTargets" id="ENSG00000163510"/>
<dbReference type="PharmGKB" id="PA164718415"/>
<dbReference type="VEuPathDB" id="HostDB:ENSG00000163510"/>
<dbReference type="eggNOG" id="KOG2140">
    <property type="taxonomic scope" value="Eukaryota"/>
</dbReference>
<dbReference type="GeneTree" id="ENSGT00940000153458"/>
<dbReference type="InParanoid" id="Q9HCG8"/>
<dbReference type="OMA" id="ILTEDMR"/>
<dbReference type="OrthoDB" id="1924287at2759"/>
<dbReference type="PAN-GO" id="Q9HCG8">
    <property type="GO annotations" value="3 GO annotations based on evolutionary models"/>
</dbReference>
<dbReference type="PhylomeDB" id="Q9HCG8"/>
<dbReference type="TreeFam" id="TF300510"/>
<dbReference type="PathwayCommons" id="Q9HCG8"/>
<dbReference type="Reactome" id="R-HSA-72163">
    <property type="pathway name" value="mRNA Splicing - Major Pathway"/>
</dbReference>
<dbReference type="SignaLink" id="Q9HCG8"/>
<dbReference type="BioGRID-ORCS" id="57703">
    <property type="hits" value="805 hits in 1173 CRISPR screens"/>
</dbReference>
<dbReference type="CD-CODE" id="804901D1">
    <property type="entry name" value="Nuclear speckle"/>
</dbReference>
<dbReference type="CD-CODE" id="DEE660B4">
    <property type="entry name" value="Stress granule"/>
</dbReference>
<dbReference type="ChiTaRS" id="CWC22">
    <property type="organism name" value="human"/>
</dbReference>
<dbReference type="EvolutionaryTrace" id="Q9HCG8"/>
<dbReference type="GenomeRNAi" id="57703"/>
<dbReference type="Pharos" id="Q9HCG8">
    <property type="development level" value="Tbio"/>
</dbReference>
<dbReference type="PRO" id="PR:Q9HCG8"/>
<dbReference type="Proteomes" id="UP000005640">
    <property type="component" value="Chromosome 2"/>
</dbReference>
<dbReference type="RNAct" id="Q9HCG8">
    <property type="molecule type" value="protein"/>
</dbReference>
<dbReference type="Bgee" id="ENSG00000163510">
    <property type="expression patterns" value="Expressed in epithelial cell of pancreas and 190 other cell types or tissues"/>
</dbReference>
<dbReference type="ExpressionAtlas" id="Q9HCG8">
    <property type="expression patterns" value="baseline and differential"/>
</dbReference>
<dbReference type="GO" id="GO:0071013">
    <property type="term" value="C:catalytic step 2 spliceosome"/>
    <property type="evidence" value="ECO:0000314"/>
    <property type="project" value="UniProtKB"/>
</dbReference>
<dbReference type="GO" id="GO:0005829">
    <property type="term" value="C:cytosol"/>
    <property type="evidence" value="ECO:0000314"/>
    <property type="project" value="HPA"/>
</dbReference>
<dbReference type="GO" id="GO:0016607">
    <property type="term" value="C:nuclear speck"/>
    <property type="evidence" value="ECO:0000314"/>
    <property type="project" value="UniProtKB"/>
</dbReference>
<dbReference type="GO" id="GO:0005654">
    <property type="term" value="C:nucleoplasm"/>
    <property type="evidence" value="ECO:0000304"/>
    <property type="project" value="Reactome"/>
</dbReference>
<dbReference type="GO" id="GO:0005634">
    <property type="term" value="C:nucleus"/>
    <property type="evidence" value="ECO:0000314"/>
    <property type="project" value="UniProtKB"/>
</dbReference>
<dbReference type="GO" id="GO:0005681">
    <property type="term" value="C:spliceosomal complex"/>
    <property type="evidence" value="ECO:0000314"/>
    <property type="project" value="UniProtKB"/>
</dbReference>
<dbReference type="GO" id="GO:0071006">
    <property type="term" value="C:U2-type catalytic step 1 spliceosome"/>
    <property type="evidence" value="ECO:0000314"/>
    <property type="project" value="UniProtKB"/>
</dbReference>
<dbReference type="GO" id="GO:0071007">
    <property type="term" value="C:U2-type catalytic step 2 spliceosome"/>
    <property type="evidence" value="ECO:0000314"/>
    <property type="project" value="UniProtKB"/>
</dbReference>
<dbReference type="GO" id="GO:0071005">
    <property type="term" value="C:U2-type precatalytic spliceosome"/>
    <property type="evidence" value="ECO:0000314"/>
    <property type="project" value="UniProtKB"/>
</dbReference>
<dbReference type="GO" id="GO:0003723">
    <property type="term" value="F:RNA binding"/>
    <property type="evidence" value="ECO:0000314"/>
    <property type="project" value="UniProtKB"/>
</dbReference>
<dbReference type="GO" id="GO:0000398">
    <property type="term" value="P:mRNA splicing, via spliceosome"/>
    <property type="evidence" value="ECO:0000314"/>
    <property type="project" value="UniProtKB"/>
</dbReference>
<dbReference type="GO" id="GO:0048024">
    <property type="term" value="P:regulation of mRNA splicing, via spliceosome"/>
    <property type="evidence" value="ECO:0000305"/>
    <property type="project" value="UniProtKB"/>
</dbReference>
<dbReference type="FunFam" id="1.25.40.180:FF:000004">
    <property type="entry name" value="pre-mRNA-splicing factor CWC22 homolog"/>
    <property type="match status" value="1"/>
</dbReference>
<dbReference type="Gene3D" id="1.25.40.180">
    <property type="match status" value="1"/>
</dbReference>
<dbReference type="IDEAL" id="IID00595"/>
<dbReference type="InterPro" id="IPR016024">
    <property type="entry name" value="ARM-type_fold"/>
</dbReference>
<dbReference type="InterPro" id="IPR050781">
    <property type="entry name" value="CWC22_splicing_factor"/>
</dbReference>
<dbReference type="InterPro" id="IPR003891">
    <property type="entry name" value="Initiation_fac_eIF4g_MI"/>
</dbReference>
<dbReference type="InterPro" id="IPR003890">
    <property type="entry name" value="MIF4G-like_typ-3"/>
</dbReference>
<dbReference type="PANTHER" id="PTHR18034">
    <property type="entry name" value="CELL CYCLE CONTROL PROTEIN CWF22-RELATED"/>
    <property type="match status" value="1"/>
</dbReference>
<dbReference type="PANTHER" id="PTHR18034:SF3">
    <property type="entry name" value="PRE-MRNA-SPLICING FACTOR CWC22 HOMOLOG"/>
    <property type="match status" value="1"/>
</dbReference>
<dbReference type="Pfam" id="PF02847">
    <property type="entry name" value="MA3"/>
    <property type="match status" value="1"/>
</dbReference>
<dbReference type="Pfam" id="PF02854">
    <property type="entry name" value="MIF4G"/>
    <property type="match status" value="1"/>
</dbReference>
<dbReference type="SMART" id="SM00544">
    <property type="entry name" value="MA3"/>
    <property type="match status" value="1"/>
</dbReference>
<dbReference type="SMART" id="SM00543">
    <property type="entry name" value="MIF4G"/>
    <property type="match status" value="1"/>
</dbReference>
<dbReference type="SUPFAM" id="SSF48371">
    <property type="entry name" value="ARM repeat"/>
    <property type="match status" value="1"/>
</dbReference>
<dbReference type="PROSITE" id="PS51366">
    <property type="entry name" value="MI"/>
    <property type="match status" value="1"/>
</dbReference>
<name>CWC22_HUMAN</name>
<feature type="chain" id="PRO_0000302005" description="Pre-mRNA-splicing factor CWC22 homolog">
    <location>
        <begin position="1"/>
        <end position="908"/>
    </location>
</feature>
<feature type="domain" description="MIF4G" evidence="2">
    <location>
        <begin position="163"/>
        <end position="346"/>
    </location>
</feature>
<feature type="domain" description="MI" evidence="2">
    <location>
        <begin position="454"/>
        <end position="570"/>
    </location>
</feature>
<feature type="region of interest" description="Disordered" evidence="3">
    <location>
        <begin position="1"/>
        <end position="129"/>
    </location>
</feature>
<feature type="region of interest" description="Disordered" evidence="3">
    <location>
        <begin position="404"/>
        <end position="443"/>
    </location>
</feature>
<feature type="region of interest" description="Disordered" evidence="3">
    <location>
        <begin position="654"/>
        <end position="908"/>
    </location>
</feature>
<feature type="compositionally biased region" description="Polar residues" evidence="3">
    <location>
        <begin position="1"/>
        <end position="10"/>
    </location>
</feature>
<feature type="compositionally biased region" description="Basic and acidic residues" evidence="3">
    <location>
        <begin position="28"/>
        <end position="56"/>
    </location>
</feature>
<feature type="compositionally biased region" description="Basic and acidic residues" evidence="3">
    <location>
        <begin position="66"/>
        <end position="85"/>
    </location>
</feature>
<feature type="compositionally biased region" description="Polar residues" evidence="3">
    <location>
        <begin position="100"/>
        <end position="110"/>
    </location>
</feature>
<feature type="compositionally biased region" description="Basic and acidic residues" evidence="3">
    <location>
        <begin position="113"/>
        <end position="122"/>
    </location>
</feature>
<feature type="compositionally biased region" description="Acidic residues" evidence="3">
    <location>
        <begin position="407"/>
        <end position="438"/>
    </location>
</feature>
<feature type="compositionally biased region" description="Low complexity" evidence="3">
    <location>
        <begin position="666"/>
        <end position="680"/>
    </location>
</feature>
<feature type="compositionally biased region" description="Low complexity" evidence="3">
    <location>
        <begin position="703"/>
        <end position="714"/>
    </location>
</feature>
<feature type="compositionally biased region" description="Basic and acidic residues" evidence="3">
    <location>
        <begin position="726"/>
        <end position="770"/>
    </location>
</feature>
<feature type="compositionally biased region" description="Basic and acidic residues" evidence="3">
    <location>
        <begin position="801"/>
        <end position="817"/>
    </location>
</feature>
<feature type="compositionally biased region" description="Basic and acidic residues" evidence="3">
    <location>
        <begin position="826"/>
        <end position="908"/>
    </location>
</feature>
<feature type="modified residue" description="Phosphoserine" evidence="27">
    <location>
        <position position="39"/>
    </location>
</feature>
<feature type="modified residue" description="Phosphoserine" evidence="26">
    <location>
        <position position="61"/>
    </location>
</feature>
<feature type="modified residue" description="Phosphoserine" evidence="1">
    <location>
        <position position="107"/>
    </location>
</feature>
<feature type="modified residue" description="Phosphoserine" evidence="27">
    <location>
        <position position="786"/>
    </location>
</feature>
<feature type="modified residue" description="Phosphoserine" evidence="25 26">
    <location>
        <position position="829"/>
    </location>
</feature>
<feature type="sequence variant" id="VAR_057513" description="In dbSNP:rs17778270.">
    <original>A</original>
    <variation>V</variation>
    <location>
        <position position="656"/>
    </location>
</feature>
<feature type="sequence variant" id="VAR_057514" description="In dbSNP:rs11903115.">
    <original>D</original>
    <variation>V</variation>
    <location>
        <position position="741"/>
    </location>
</feature>
<feature type="sequence variant" id="VAR_057515" description="In dbSNP:rs1046356.">
    <original>R</original>
    <variation>Q</variation>
    <location>
        <position position="794"/>
    </location>
</feature>
<feature type="mutagenesis site" description="No effect on EIF4A3 incorporation into EJCs." evidence="8">
    <original>G</original>
    <variation>Y</variation>
    <location>
        <position position="168"/>
    </location>
</feature>
<feature type="mutagenesis site" description="Loss of EIF4A3-binding.">
    <original>NKVN</original>
    <variation>AAVA</variation>
    <location>
        <begin position="171"/>
        <end position="174"/>
    </location>
</feature>
<feature type="mutagenesis site" description="Loss of EIF4A3-binding." evidence="6">
    <original>NK</original>
    <variation>DE</variation>
    <location>
        <begin position="171"/>
        <end position="172"/>
    </location>
</feature>
<feature type="mutagenesis site" description="Decreased EIF4A3-binding; when associated with A-334." evidence="8">
    <original>R</original>
    <variation>A</variation>
    <location>
        <position position="331"/>
    </location>
</feature>
<feature type="mutagenesis site" description="Decreased EIF4A3-binding; when associated with A-331." evidence="8">
    <original>Y</original>
    <variation>A</variation>
    <location>
        <position position="334"/>
    </location>
</feature>
<feature type="sequence conflict" description="In Ref. 2; BAB15197." evidence="15" ref="2">
    <original>H</original>
    <variation>Y</variation>
    <location>
        <position position="270"/>
    </location>
</feature>
<feature type="sequence conflict" description="In Ref. 2; BAB15197." evidence="15" ref="2">
    <original>M</original>
    <variation>V</variation>
    <location>
        <position position="550"/>
    </location>
</feature>
<feature type="sequence conflict" description="In Ref. 4; AAH31216." evidence="15" ref="4">
    <original>E</original>
    <variation>G</variation>
    <location>
        <position position="613"/>
    </location>
</feature>
<feature type="sequence conflict" description="In Ref. 4; AAH16651." evidence="15" ref="4">
    <original>S</original>
    <variation>F</variation>
    <location>
        <position position="685"/>
    </location>
</feature>
<feature type="sequence conflict" description="In Ref. 4; AAH31216." evidence="15" ref="4">
    <original>S</original>
    <variation>G</variation>
    <location>
        <position position="701"/>
    </location>
</feature>
<feature type="sequence conflict" description="In Ref. 4; AAH31216." evidence="15" ref="4">
    <original>R</original>
    <variation>K</variation>
    <location>
        <position position="742"/>
    </location>
</feature>
<feature type="sequence conflict" description="In Ref. 2; BAB15612 and 4; AAH53573/AAH93952/AAH93954." evidence="15" ref="2 4">
    <original>S</original>
    <variation>R</variation>
    <location>
        <position position="773"/>
    </location>
</feature>
<feature type="helix" evidence="28">
    <location>
        <begin position="136"/>
        <end position="140"/>
    </location>
</feature>
<feature type="helix" evidence="28">
    <location>
        <begin position="150"/>
        <end position="172"/>
    </location>
</feature>
<feature type="turn" evidence="28">
    <location>
        <begin position="175"/>
        <end position="177"/>
    </location>
</feature>
<feature type="helix" evidence="28">
    <location>
        <begin position="178"/>
        <end position="186"/>
    </location>
</feature>
<feature type="turn" evidence="28">
    <location>
        <begin position="190"/>
        <end position="193"/>
    </location>
</feature>
<feature type="helix" evidence="28">
    <location>
        <begin position="194"/>
        <end position="207"/>
    </location>
</feature>
<feature type="helix" evidence="28">
    <location>
        <begin position="209"/>
        <end position="211"/>
    </location>
</feature>
<feature type="helix" evidence="28">
    <location>
        <begin position="212"/>
        <end position="225"/>
    </location>
</feature>
<feature type="helix" evidence="28">
    <location>
        <begin position="227"/>
        <end position="247"/>
    </location>
</feature>
<feature type="helix" evidence="28">
    <location>
        <begin position="250"/>
        <end position="265"/>
    </location>
</feature>
<feature type="helix" evidence="28">
    <location>
        <begin position="272"/>
        <end position="283"/>
    </location>
</feature>
<feature type="helix" evidence="28">
    <location>
        <begin position="287"/>
        <end position="307"/>
    </location>
</feature>
<feature type="helix" evidence="28">
    <location>
        <begin position="309"/>
        <end position="324"/>
    </location>
</feature>
<feature type="helix" evidence="28">
    <location>
        <begin position="330"/>
        <end position="344"/>
    </location>
</feature>
<feature type="strand" evidence="31">
    <location>
        <begin position="347"/>
        <end position="350"/>
    </location>
</feature>
<feature type="turn" evidence="31">
    <location>
        <begin position="355"/>
        <end position="357"/>
    </location>
</feature>
<feature type="helix" evidence="28">
    <location>
        <begin position="362"/>
        <end position="364"/>
    </location>
</feature>
<feature type="strand" evidence="28">
    <location>
        <begin position="372"/>
        <end position="374"/>
    </location>
</feature>
<feature type="helix" evidence="28">
    <location>
        <begin position="380"/>
        <end position="383"/>
    </location>
</feature>
<feature type="helix" evidence="28">
    <location>
        <begin position="391"/>
        <end position="405"/>
    </location>
</feature>
<feature type="strand" evidence="30">
    <location>
        <begin position="444"/>
        <end position="446"/>
    </location>
</feature>
<feature type="helix" evidence="30">
    <location>
        <begin position="450"/>
        <end position="465"/>
    </location>
</feature>
<feature type="helix" evidence="30">
    <location>
        <begin position="469"/>
        <end position="479"/>
    </location>
</feature>
<feature type="helix" evidence="30">
    <location>
        <begin position="483"/>
        <end position="485"/>
    </location>
</feature>
<feature type="helix" evidence="30">
    <location>
        <begin position="486"/>
        <end position="498"/>
    </location>
</feature>
<feature type="strand" evidence="30">
    <location>
        <begin position="500"/>
        <end position="502"/>
    </location>
</feature>
<feature type="helix" evidence="30">
    <location>
        <begin position="505"/>
        <end position="517"/>
    </location>
</feature>
<feature type="helix" evidence="30">
    <location>
        <begin position="519"/>
        <end position="534"/>
    </location>
</feature>
<feature type="helix" evidence="30">
    <location>
        <begin position="535"/>
        <end position="538"/>
    </location>
</feature>
<feature type="helix" evidence="30">
    <location>
        <begin position="541"/>
        <end position="556"/>
    </location>
</feature>
<feature type="helix" evidence="30">
    <location>
        <begin position="562"/>
        <end position="567"/>
    </location>
</feature>
<feature type="turn" evidence="30">
    <location>
        <begin position="572"/>
        <end position="574"/>
    </location>
</feature>
<feature type="helix" evidence="30">
    <location>
        <begin position="577"/>
        <end position="594"/>
    </location>
</feature>
<feature type="helix" evidence="30">
    <location>
        <begin position="596"/>
        <end position="603"/>
    </location>
</feature>
<feature type="helix" evidence="29">
    <location>
        <begin position="604"/>
        <end position="606"/>
    </location>
</feature>
<feature type="turn" evidence="30">
    <location>
        <begin position="607"/>
        <end position="610"/>
    </location>
</feature>
<feature type="helix" evidence="30">
    <location>
        <begin position="611"/>
        <end position="613"/>
    </location>
</feature>
<feature type="helix" evidence="30">
    <location>
        <begin position="621"/>
        <end position="634"/>
    </location>
</feature>
<feature type="helix" evidence="30">
    <location>
        <begin position="638"/>
        <end position="640"/>
    </location>
</feature>
<feature type="helix" evidence="30">
    <location>
        <begin position="641"/>
        <end position="648"/>
    </location>
</feature>
<protein>
    <recommendedName>
        <fullName>Pre-mRNA-splicing factor CWC22 homolog</fullName>
    </recommendedName>
    <alternativeName>
        <fullName>Nucampholin homolog</fullName>
    </alternativeName>
    <alternativeName>
        <fullName>fSAPb</fullName>
    </alternativeName>
</protein>
<organism>
    <name type="scientific">Homo sapiens</name>
    <name type="common">Human</name>
    <dbReference type="NCBI Taxonomy" id="9606"/>
    <lineage>
        <taxon>Eukaryota</taxon>
        <taxon>Metazoa</taxon>
        <taxon>Chordata</taxon>
        <taxon>Craniata</taxon>
        <taxon>Vertebrata</taxon>
        <taxon>Euteleostomi</taxon>
        <taxon>Mammalia</taxon>
        <taxon>Eutheria</taxon>
        <taxon>Euarchontoglires</taxon>
        <taxon>Primates</taxon>
        <taxon>Haplorrhini</taxon>
        <taxon>Catarrhini</taxon>
        <taxon>Hominidae</taxon>
        <taxon>Homo</taxon>
    </lineage>
</organism>
<keyword id="KW-0002">3D-structure</keyword>
<keyword id="KW-0507">mRNA processing</keyword>
<keyword id="KW-0508">mRNA splicing</keyword>
<keyword id="KW-0539">Nucleus</keyword>
<keyword id="KW-0597">Phosphoprotein</keyword>
<keyword id="KW-1267">Proteomics identification</keyword>
<keyword id="KW-1185">Reference proteome</keyword>
<keyword id="KW-0747">Spliceosome</keyword>
<sequence length="908" mass="105466">MKSSVAQIKPSSGHDRRENLNSYQRNSSPEDRYEEQERSPRDRDYFDYSRSDYEHSRRGRSYDSSMESRNRDREKRRERERDTDRKRSRKSPSPGRRNPETSVTQSSSAQDEPATKKKKDELDPLLTRTGGAYIPPAKLRMMQEQITDKNSLAYQRMSWEALKKSINGLINKVNISNISIIIQELLQENIVRGRGLLSRSVLQAQSASPIFTHVYAALVAIINSKFPQIGELILKRLILNFRKGYRRNDKQLCLTASKFVAHLINQNVAHEVLCLEMLTLLLERPTDDSVEVAIGFLKECGLKLTQVSPRGINAIFERLRNILHESEIDKRVQYMIEVMFAVRKDGFKDHPIILEGLDLVEEDDQFTHMLPLEDDYNPEDVLNVFKMDPNFMENEEKYKAIKKEILDEGDTDSNTDQDAGSSEEDEEEEEEEGEEDEEGQKVTIHDKTEINLVSFRRTIYLAIQSSLDFEECAHKLLKMEFPESQTKELCNMILDCCAQQRTYEKFFGLLAGRFCMLKKEYMESFEGIFKEQYDTIHRLETNKLRNVAKMFAHLLYTDSLPWSVLECIKLSEETTTSSSRIFVKIFFQELCEYMGLPKLNARLKDETLQPFFEGLLPRDNPRNTRFAINFFTSIGLGGLTDELREHLKNTPKVIVAQKPDVEQNKSSPSSSSSASSSSESDSSDSDSDSSDSSSESSSEESDSSSISSHSSASANDVRKKGHGKTRSKEVDKLIRNQQTNDRKQKERRQEHGHQETRTERERRSEKHRDQNSSGSNWRDPITKYTSDKDVPSERNNYSRVANDRDQEMHIDLENKHGDPKKKRGERRNSFSENEKHTHRIKDSENFRRKDRSKSKEMNRKHSGSRSDEDRYQNGAERRWEKSSRYSEQSRESKKNQDRRREKSPAKQK</sequence>